<evidence type="ECO:0000256" key="1">
    <source>
        <dbReference type="SAM" id="MobiDB-lite"/>
    </source>
</evidence>
<evidence type="ECO:0000305" key="2"/>
<feature type="chain" id="PRO_0000168810" description="Uncharacterized protein YmdF">
    <location>
        <begin position="1"/>
        <end position="57"/>
    </location>
</feature>
<feature type="region of interest" description="Disordered" evidence="1">
    <location>
        <begin position="1"/>
        <end position="57"/>
    </location>
</feature>
<feature type="compositionally biased region" description="Basic and acidic residues" evidence="1">
    <location>
        <begin position="12"/>
        <end position="23"/>
    </location>
</feature>
<feature type="compositionally biased region" description="Basic and acidic residues" evidence="1">
    <location>
        <begin position="36"/>
        <end position="45"/>
    </location>
</feature>
<feature type="compositionally biased region" description="Basic residues" evidence="1">
    <location>
        <begin position="46"/>
        <end position="57"/>
    </location>
</feature>
<name>YMDF_ECOLI</name>
<proteinExistence type="inferred from homology"/>
<keyword id="KW-1185">Reference proteome</keyword>
<sequence>MANHRGGSGNFAEDRERASEAGKKGGQHSGGNFKNDPQRASEAGKKGGKSSHGKSDN</sequence>
<gene>
    <name type="primary">ymdF</name>
    <name type="ordered locus">b4518</name>
    <name type="ordered locus">JW5136</name>
</gene>
<organism>
    <name type="scientific">Escherichia coli (strain K12)</name>
    <dbReference type="NCBI Taxonomy" id="83333"/>
    <lineage>
        <taxon>Bacteria</taxon>
        <taxon>Pseudomonadati</taxon>
        <taxon>Pseudomonadota</taxon>
        <taxon>Gammaproteobacteria</taxon>
        <taxon>Enterobacterales</taxon>
        <taxon>Enterobacteriaceae</taxon>
        <taxon>Escherichia</taxon>
    </lineage>
</organism>
<accession>P56614</accession>
<accession>Q9R302</accession>
<accession>Q9ZN60</accession>
<comment type="similarity">
    <text evidence="2">Belongs to the con-10 family.</text>
</comment>
<dbReference type="EMBL" id="U00096">
    <property type="protein sequence ID" value="AAC74090.2"/>
    <property type="molecule type" value="Genomic_DNA"/>
</dbReference>
<dbReference type="EMBL" id="AP009048">
    <property type="protein sequence ID" value="BAA35772.2"/>
    <property type="molecule type" value="Genomic_DNA"/>
</dbReference>
<dbReference type="PIR" id="C64842">
    <property type="entry name" value="C64842"/>
</dbReference>
<dbReference type="RefSeq" id="NP_415525.2">
    <property type="nucleotide sequence ID" value="NC_000913.3"/>
</dbReference>
<dbReference type="RefSeq" id="WP_001273658.1">
    <property type="nucleotide sequence ID" value="NZ_STEB01000006.1"/>
</dbReference>
<dbReference type="BioGRID" id="4259547">
    <property type="interactions" value="11"/>
</dbReference>
<dbReference type="FunCoup" id="P56614">
    <property type="interactions" value="29"/>
</dbReference>
<dbReference type="IntAct" id="P56614">
    <property type="interactions" value="1"/>
</dbReference>
<dbReference type="STRING" id="511145.b4518"/>
<dbReference type="jPOST" id="P56614"/>
<dbReference type="PaxDb" id="511145-b4518"/>
<dbReference type="EnsemblBacteria" id="AAC74090">
    <property type="protein sequence ID" value="AAC74090"/>
    <property type="gene ID" value="b4518"/>
</dbReference>
<dbReference type="GeneID" id="945598"/>
<dbReference type="KEGG" id="ecj:JW5136"/>
<dbReference type="KEGG" id="eco:b4518"/>
<dbReference type="KEGG" id="ecoc:C3026_06120"/>
<dbReference type="PATRIC" id="fig|511145.12.peg.1041"/>
<dbReference type="EchoBASE" id="EB4104"/>
<dbReference type="eggNOG" id="COG3729">
    <property type="taxonomic scope" value="Bacteria"/>
</dbReference>
<dbReference type="HOGENOM" id="CLU_142865_5_1_6"/>
<dbReference type="InParanoid" id="P56614"/>
<dbReference type="OMA" id="RDQERTG"/>
<dbReference type="OrthoDB" id="6565901at2"/>
<dbReference type="PhylomeDB" id="P56614"/>
<dbReference type="BioCyc" id="EcoCyc:MONOMER0-2665"/>
<dbReference type="PRO" id="PR:P56614"/>
<dbReference type="Proteomes" id="UP000000625">
    <property type="component" value="Chromosome"/>
</dbReference>
<dbReference type="GO" id="GO:0043709">
    <property type="term" value="P:cell adhesion involved in single-species biofilm formation"/>
    <property type="evidence" value="ECO:0000315"/>
    <property type="project" value="EcoCyc"/>
</dbReference>
<dbReference type="InterPro" id="IPR019626">
    <property type="entry name" value="Stress-induced_KGG_rpt"/>
</dbReference>
<dbReference type="Pfam" id="PF10685">
    <property type="entry name" value="KGG"/>
    <property type="match status" value="2"/>
</dbReference>
<protein>
    <recommendedName>
        <fullName>Uncharacterized protein YmdF</fullName>
    </recommendedName>
</protein>
<reference key="1">
    <citation type="journal article" date="1996" name="DNA Res.">
        <title>A 718-kb DNA sequence of the Escherichia coli K-12 genome corresponding to the 12.7-28.0 min region on the linkage map.</title>
        <authorList>
            <person name="Oshima T."/>
            <person name="Aiba H."/>
            <person name="Baba T."/>
            <person name="Fujita K."/>
            <person name="Hayashi K."/>
            <person name="Honjo A."/>
            <person name="Ikemoto K."/>
            <person name="Inada T."/>
            <person name="Itoh T."/>
            <person name="Kajihara M."/>
            <person name="Kanai K."/>
            <person name="Kashimoto K."/>
            <person name="Kimura S."/>
            <person name="Kitagawa M."/>
            <person name="Makino K."/>
            <person name="Masuda S."/>
            <person name="Miki T."/>
            <person name="Mizobuchi K."/>
            <person name="Mori H."/>
            <person name="Motomura K."/>
            <person name="Nakamura Y."/>
            <person name="Nashimoto H."/>
            <person name="Nishio Y."/>
            <person name="Saito N."/>
            <person name="Sampei G."/>
            <person name="Seki Y."/>
            <person name="Tagami H."/>
            <person name="Takemoto K."/>
            <person name="Wada C."/>
            <person name="Yamamoto Y."/>
            <person name="Yano M."/>
            <person name="Horiuchi T."/>
        </authorList>
    </citation>
    <scope>NUCLEOTIDE SEQUENCE [LARGE SCALE GENOMIC DNA]</scope>
    <source>
        <strain>K12 / W3110 / ATCC 27325 / DSM 5911</strain>
    </source>
</reference>
<reference key="2">
    <citation type="journal article" date="1997" name="Science">
        <title>The complete genome sequence of Escherichia coli K-12.</title>
        <authorList>
            <person name="Blattner F.R."/>
            <person name="Plunkett G. III"/>
            <person name="Bloch C.A."/>
            <person name="Perna N.T."/>
            <person name="Burland V."/>
            <person name="Riley M."/>
            <person name="Collado-Vides J."/>
            <person name="Glasner J.D."/>
            <person name="Rode C.K."/>
            <person name="Mayhew G.F."/>
            <person name="Gregor J."/>
            <person name="Davis N.W."/>
            <person name="Kirkpatrick H.A."/>
            <person name="Goeden M.A."/>
            <person name="Rose D.J."/>
            <person name="Mau B."/>
            <person name="Shao Y."/>
        </authorList>
    </citation>
    <scope>NUCLEOTIDE SEQUENCE [LARGE SCALE GENOMIC DNA]</scope>
    <source>
        <strain>K12 / MG1655 / ATCC 47076</strain>
    </source>
</reference>
<reference key="3">
    <citation type="journal article" date="2006" name="Mol. Syst. Biol.">
        <title>Highly accurate genome sequences of Escherichia coli K-12 strains MG1655 and W3110.</title>
        <authorList>
            <person name="Hayashi K."/>
            <person name="Morooka N."/>
            <person name="Yamamoto Y."/>
            <person name="Fujita K."/>
            <person name="Isono K."/>
            <person name="Choi S."/>
            <person name="Ohtsubo E."/>
            <person name="Baba T."/>
            <person name="Wanner B.L."/>
            <person name="Mori H."/>
            <person name="Horiuchi T."/>
        </authorList>
    </citation>
    <scope>NUCLEOTIDE SEQUENCE [LARGE SCALE GENOMIC DNA]</scope>
    <source>
        <strain>K12 / W3110 / ATCC 27325 / DSM 5911</strain>
    </source>
</reference>
<reference key="4">
    <citation type="unpublished observations" date="1998-08">
        <authorList>
            <person name="Rudd K.E."/>
        </authorList>
    </citation>
    <scope>IDENTIFICATION</scope>
</reference>